<sequence length="307" mass="33875">MEGRLNNMWRLTVNESKFVESALQSELRVDGRGLYDYRKLTIKFGKEYGSSQVQLGQTHVMAFVTAQLVQPYKDRPSEGSFSIFTEFSPMADPSFEPGHPGESAVELGRIIDRALRESRAVDTESLCVLAGKLVWSVRIDLHILDNGGNLVDAANVAALAALMTFRRPDCTVGGDNSQDVIIHPPEEREPLPLIIHHLPIAFTFGFFNKGSILVMDPTYVEEAVMCGRMTVTVNANGDICAIQKPGEEGVNQSVILHCLRLASSRASATTKIIRDAVEAYNRERSSQKVKRHHTLAKSEVLGPIVVV</sequence>
<comment type="function">
    <text evidence="1">Probable 3'-&gt;5' exoribonuclease involved in the regulation of cuticular wax biosynthesis. Can perform exosomal functions and partially complement the yeast rrp45 null mutant.</text>
</comment>
<comment type="subcellular location">
    <subcellularLocation>
        <location evidence="1">Cytoplasm</location>
    </subcellularLocation>
    <subcellularLocation>
        <location evidence="1">Nucleus</location>
    </subcellularLocation>
    <text>Excluded from the nucleolus.</text>
</comment>
<comment type="tissue specificity">
    <text>Expressed in roots, leaves, stems, buds and siliques.</text>
</comment>
<comment type="disruption phenotype">
    <text evidence="1">No visible phenotype under normal growth conditions.</text>
</comment>
<comment type="similarity">
    <text evidence="3">Belongs to the RNase PH family.</text>
</comment>
<keyword id="KW-0963">Cytoplasm</keyword>
<keyword id="KW-0539">Nucleus</keyword>
<keyword id="KW-1185">Reference proteome</keyword>
<keyword id="KW-0694">RNA-binding</keyword>
<accession>Q9LDM2</accession>
<accession>Q8LGD7</accession>
<gene>
    <name evidence="3" type="primary">RRP45A</name>
    <name type="ordered locus">At3g12990</name>
    <name type="ORF">MGH6.14</name>
</gene>
<dbReference type="EMBL" id="AB026645">
    <property type="protein sequence ID" value="BAB02509.1"/>
    <property type="molecule type" value="Genomic_DNA"/>
</dbReference>
<dbReference type="EMBL" id="CP002686">
    <property type="protein sequence ID" value="AEE75271.1"/>
    <property type="molecule type" value="Genomic_DNA"/>
</dbReference>
<dbReference type="EMBL" id="CP002686">
    <property type="protein sequence ID" value="AEE75273.1"/>
    <property type="molecule type" value="Genomic_DNA"/>
</dbReference>
<dbReference type="EMBL" id="BT003077">
    <property type="protein sequence ID" value="AAO23642.1"/>
    <property type="molecule type" value="mRNA"/>
</dbReference>
<dbReference type="EMBL" id="AK227231">
    <property type="protein sequence ID" value="BAE99268.1"/>
    <property type="molecule type" value="mRNA"/>
</dbReference>
<dbReference type="EMBL" id="AY084328">
    <property type="protein sequence ID" value="AAM60913.1"/>
    <property type="molecule type" value="mRNA"/>
</dbReference>
<dbReference type="RefSeq" id="NP_001189874.1">
    <property type="nucleotide sequence ID" value="NM_001202945.2"/>
</dbReference>
<dbReference type="RefSeq" id="NP_566441.1">
    <property type="nucleotide sequence ID" value="NM_112136.5"/>
</dbReference>
<dbReference type="SMR" id="Q9LDM2"/>
<dbReference type="BioGRID" id="5819">
    <property type="interactions" value="13"/>
</dbReference>
<dbReference type="FunCoup" id="Q9LDM2">
    <property type="interactions" value="3669"/>
</dbReference>
<dbReference type="STRING" id="3702.Q9LDM2"/>
<dbReference type="PaxDb" id="3702-AT3G12990.1"/>
<dbReference type="ProteomicsDB" id="220544"/>
<dbReference type="DNASU" id="820485"/>
<dbReference type="EnsemblPlants" id="AT3G12990.1">
    <property type="protein sequence ID" value="AT3G12990.1"/>
    <property type="gene ID" value="AT3G12990"/>
</dbReference>
<dbReference type="EnsemblPlants" id="AT3G12990.3">
    <property type="protein sequence ID" value="AT3G12990.3"/>
    <property type="gene ID" value="AT3G12990"/>
</dbReference>
<dbReference type="GeneID" id="820485"/>
<dbReference type="Gramene" id="AT3G12990.1">
    <property type="protein sequence ID" value="AT3G12990.1"/>
    <property type="gene ID" value="AT3G12990"/>
</dbReference>
<dbReference type="Gramene" id="AT3G12990.3">
    <property type="protein sequence ID" value="AT3G12990.3"/>
    <property type="gene ID" value="AT3G12990"/>
</dbReference>
<dbReference type="KEGG" id="ath:AT3G12990"/>
<dbReference type="Araport" id="AT3G12990"/>
<dbReference type="TAIR" id="AT3G12990">
    <property type="gene designation" value="RRP45A"/>
</dbReference>
<dbReference type="eggNOG" id="KOG1614">
    <property type="taxonomic scope" value="Eukaryota"/>
</dbReference>
<dbReference type="HOGENOM" id="CLU_038194_1_0_1"/>
<dbReference type="InParanoid" id="Q9LDM2"/>
<dbReference type="OMA" id="TQHESKL"/>
<dbReference type="OrthoDB" id="10264038at2759"/>
<dbReference type="PhylomeDB" id="Q9LDM2"/>
<dbReference type="PRO" id="PR:Q9LDM2"/>
<dbReference type="Proteomes" id="UP000006548">
    <property type="component" value="Chromosome 3"/>
</dbReference>
<dbReference type="ExpressionAtlas" id="Q9LDM2">
    <property type="expression patterns" value="baseline and differential"/>
</dbReference>
<dbReference type="GO" id="GO:0005737">
    <property type="term" value="C:cytoplasm"/>
    <property type="evidence" value="ECO:0000314"/>
    <property type="project" value="TAIR"/>
</dbReference>
<dbReference type="GO" id="GO:0000178">
    <property type="term" value="C:exosome (RNase complex)"/>
    <property type="evidence" value="ECO:0007669"/>
    <property type="project" value="InterPro"/>
</dbReference>
<dbReference type="GO" id="GO:0005634">
    <property type="term" value="C:nucleus"/>
    <property type="evidence" value="ECO:0000314"/>
    <property type="project" value="TAIR"/>
</dbReference>
<dbReference type="GO" id="GO:0000175">
    <property type="term" value="F:3'-5'-RNA exonuclease activity"/>
    <property type="evidence" value="ECO:0000250"/>
    <property type="project" value="TAIR"/>
</dbReference>
<dbReference type="GO" id="GO:0003723">
    <property type="term" value="F:RNA binding"/>
    <property type="evidence" value="ECO:0007669"/>
    <property type="project" value="UniProtKB-KW"/>
</dbReference>
<dbReference type="GO" id="GO:0006396">
    <property type="term" value="P:RNA processing"/>
    <property type="evidence" value="ECO:0007669"/>
    <property type="project" value="InterPro"/>
</dbReference>
<dbReference type="CDD" id="cd11368">
    <property type="entry name" value="RNase_PH_RRP45"/>
    <property type="match status" value="1"/>
</dbReference>
<dbReference type="FunFam" id="3.30.230.70:FF:000007">
    <property type="entry name" value="Exosome complex component RRP45B"/>
    <property type="match status" value="1"/>
</dbReference>
<dbReference type="Gene3D" id="3.30.230.70">
    <property type="entry name" value="GHMP Kinase, N-terminal domain"/>
    <property type="match status" value="1"/>
</dbReference>
<dbReference type="InterPro" id="IPR001247">
    <property type="entry name" value="ExoRNase_PH_dom1"/>
</dbReference>
<dbReference type="InterPro" id="IPR015847">
    <property type="entry name" value="ExoRNase_PH_dom2"/>
</dbReference>
<dbReference type="InterPro" id="IPR036345">
    <property type="entry name" value="ExoRNase_PH_dom2_sf"/>
</dbReference>
<dbReference type="InterPro" id="IPR050590">
    <property type="entry name" value="Exosome_comp_Rrp42_subfam"/>
</dbReference>
<dbReference type="InterPro" id="IPR027408">
    <property type="entry name" value="PNPase/RNase_PH_dom_sf"/>
</dbReference>
<dbReference type="InterPro" id="IPR020568">
    <property type="entry name" value="Ribosomal_Su5_D2-typ_SF"/>
</dbReference>
<dbReference type="InterPro" id="IPR033100">
    <property type="entry name" value="Rrp45"/>
</dbReference>
<dbReference type="PANTHER" id="PTHR11097:SF14">
    <property type="entry name" value="EXOSOME COMPLEX COMPONENT RRP45"/>
    <property type="match status" value="1"/>
</dbReference>
<dbReference type="PANTHER" id="PTHR11097">
    <property type="entry name" value="EXOSOME COMPLEX EXONUCLEASE RIBOSOMAL RNA PROCESSING PROTEIN"/>
    <property type="match status" value="1"/>
</dbReference>
<dbReference type="Pfam" id="PF01138">
    <property type="entry name" value="RNase_PH"/>
    <property type="match status" value="1"/>
</dbReference>
<dbReference type="Pfam" id="PF03725">
    <property type="entry name" value="RNase_PH_C"/>
    <property type="match status" value="1"/>
</dbReference>
<dbReference type="SUPFAM" id="SSF55666">
    <property type="entry name" value="Ribonuclease PH domain 2-like"/>
    <property type="match status" value="1"/>
</dbReference>
<dbReference type="SUPFAM" id="SSF54211">
    <property type="entry name" value="Ribosomal protein S5 domain 2-like"/>
    <property type="match status" value="1"/>
</dbReference>
<organism>
    <name type="scientific">Arabidopsis thaliana</name>
    <name type="common">Mouse-ear cress</name>
    <dbReference type="NCBI Taxonomy" id="3702"/>
    <lineage>
        <taxon>Eukaryota</taxon>
        <taxon>Viridiplantae</taxon>
        <taxon>Streptophyta</taxon>
        <taxon>Embryophyta</taxon>
        <taxon>Tracheophyta</taxon>
        <taxon>Spermatophyta</taxon>
        <taxon>Magnoliopsida</taxon>
        <taxon>eudicotyledons</taxon>
        <taxon>Gunneridae</taxon>
        <taxon>Pentapetalae</taxon>
        <taxon>rosids</taxon>
        <taxon>malvids</taxon>
        <taxon>Brassicales</taxon>
        <taxon>Brassicaceae</taxon>
        <taxon>Camelineae</taxon>
        <taxon>Arabidopsis</taxon>
    </lineage>
</organism>
<evidence type="ECO:0000269" key="1">
    <source>
    </source>
</evidence>
<evidence type="ECO:0000303" key="2">
    <source>
    </source>
</evidence>
<evidence type="ECO:0000305" key="3"/>
<feature type="chain" id="PRO_0000424436" description="Exosome complex component RRP45A">
    <location>
        <begin position="1"/>
        <end position="307"/>
    </location>
</feature>
<feature type="sequence conflict" description="In Ref. 5; AAM60913." evidence="3" ref="5">
    <original>K</original>
    <variation>E</variation>
    <location>
        <position position="290"/>
    </location>
</feature>
<proteinExistence type="evidence at transcript level"/>
<reference key="1">
    <citation type="journal article" date="2000" name="DNA Res.">
        <title>Structural analysis of Arabidopsis thaliana chromosome 3. I. Sequence features of the regions of 4,504,864 bp covered by sixty P1 and TAC clones.</title>
        <authorList>
            <person name="Sato S."/>
            <person name="Nakamura Y."/>
            <person name="Kaneko T."/>
            <person name="Katoh T."/>
            <person name="Asamizu E."/>
            <person name="Tabata S."/>
        </authorList>
    </citation>
    <scope>NUCLEOTIDE SEQUENCE [LARGE SCALE GENOMIC DNA]</scope>
    <source>
        <strain>cv. Columbia</strain>
    </source>
</reference>
<reference key="2">
    <citation type="journal article" date="2017" name="Plant J.">
        <title>Araport11: a complete reannotation of the Arabidopsis thaliana reference genome.</title>
        <authorList>
            <person name="Cheng C.Y."/>
            <person name="Krishnakumar V."/>
            <person name="Chan A.P."/>
            <person name="Thibaud-Nissen F."/>
            <person name="Schobel S."/>
            <person name="Town C.D."/>
        </authorList>
    </citation>
    <scope>GENOME REANNOTATION</scope>
    <source>
        <strain>cv. Columbia</strain>
    </source>
</reference>
<reference key="3">
    <citation type="journal article" date="2003" name="Science">
        <title>Empirical analysis of transcriptional activity in the Arabidopsis genome.</title>
        <authorList>
            <person name="Yamada K."/>
            <person name="Lim J."/>
            <person name="Dale J.M."/>
            <person name="Chen H."/>
            <person name="Shinn P."/>
            <person name="Palm C.J."/>
            <person name="Southwick A.M."/>
            <person name="Wu H.C."/>
            <person name="Kim C.J."/>
            <person name="Nguyen M."/>
            <person name="Pham P.K."/>
            <person name="Cheuk R.F."/>
            <person name="Karlin-Newmann G."/>
            <person name="Liu S.X."/>
            <person name="Lam B."/>
            <person name="Sakano H."/>
            <person name="Wu T."/>
            <person name="Yu G."/>
            <person name="Miranda M."/>
            <person name="Quach H.L."/>
            <person name="Tripp M."/>
            <person name="Chang C.H."/>
            <person name="Lee J.M."/>
            <person name="Toriumi M.J."/>
            <person name="Chan M.M."/>
            <person name="Tang C.C."/>
            <person name="Onodera C.S."/>
            <person name="Deng J.M."/>
            <person name="Akiyama K."/>
            <person name="Ansari Y."/>
            <person name="Arakawa T."/>
            <person name="Banh J."/>
            <person name="Banno F."/>
            <person name="Bowser L."/>
            <person name="Brooks S.Y."/>
            <person name="Carninci P."/>
            <person name="Chao Q."/>
            <person name="Choy N."/>
            <person name="Enju A."/>
            <person name="Goldsmith A.D."/>
            <person name="Gurjal M."/>
            <person name="Hansen N.F."/>
            <person name="Hayashizaki Y."/>
            <person name="Johnson-Hopson C."/>
            <person name="Hsuan V.W."/>
            <person name="Iida K."/>
            <person name="Karnes M."/>
            <person name="Khan S."/>
            <person name="Koesema E."/>
            <person name="Ishida J."/>
            <person name="Jiang P.X."/>
            <person name="Jones T."/>
            <person name="Kawai J."/>
            <person name="Kamiya A."/>
            <person name="Meyers C."/>
            <person name="Nakajima M."/>
            <person name="Narusaka M."/>
            <person name="Seki M."/>
            <person name="Sakurai T."/>
            <person name="Satou M."/>
            <person name="Tamse R."/>
            <person name="Vaysberg M."/>
            <person name="Wallender E.K."/>
            <person name="Wong C."/>
            <person name="Yamamura Y."/>
            <person name="Yuan S."/>
            <person name="Shinozaki K."/>
            <person name="Davis R.W."/>
            <person name="Theologis A."/>
            <person name="Ecker J.R."/>
        </authorList>
    </citation>
    <scope>NUCLEOTIDE SEQUENCE [LARGE SCALE MRNA]</scope>
    <source>
        <strain>cv. Columbia</strain>
    </source>
</reference>
<reference key="4">
    <citation type="submission" date="2006-07" db="EMBL/GenBank/DDBJ databases">
        <title>Large-scale analysis of RIKEN Arabidopsis full-length (RAFL) cDNAs.</title>
        <authorList>
            <person name="Totoki Y."/>
            <person name="Seki M."/>
            <person name="Ishida J."/>
            <person name="Nakajima M."/>
            <person name="Enju A."/>
            <person name="Kamiya A."/>
            <person name="Narusaka M."/>
            <person name="Shin-i T."/>
            <person name="Nakagawa M."/>
            <person name="Sakamoto N."/>
            <person name="Oishi K."/>
            <person name="Kohara Y."/>
            <person name="Kobayashi M."/>
            <person name="Toyoda A."/>
            <person name="Sakaki Y."/>
            <person name="Sakurai T."/>
            <person name="Iida K."/>
            <person name="Akiyama K."/>
            <person name="Satou M."/>
            <person name="Toyoda T."/>
            <person name="Konagaya A."/>
            <person name="Carninci P."/>
            <person name="Kawai J."/>
            <person name="Hayashizaki Y."/>
            <person name="Shinozaki K."/>
        </authorList>
    </citation>
    <scope>NUCLEOTIDE SEQUENCE [LARGE SCALE MRNA]</scope>
    <source>
        <strain>cv. Columbia</strain>
    </source>
</reference>
<reference key="5">
    <citation type="submission" date="2002-03" db="EMBL/GenBank/DDBJ databases">
        <title>Full-length cDNA from Arabidopsis thaliana.</title>
        <authorList>
            <person name="Brover V.V."/>
            <person name="Troukhan M.E."/>
            <person name="Alexandrov N.A."/>
            <person name="Lu Y.-P."/>
            <person name="Flavell R.B."/>
            <person name="Feldmann K.A."/>
        </authorList>
    </citation>
    <scope>NUCLEOTIDE SEQUENCE [LARGE SCALE MRNA]</scope>
</reference>
<reference key="6">
    <citation type="journal article" date="2007" name="Plant Cell">
        <title>A core subunit of the RNA-processing/degrading exosome specifically influences cuticular wax biosynthesis in Arabidopsis.</title>
        <authorList>
            <person name="Hooker T.S."/>
            <person name="Lam P."/>
            <person name="Zheng H."/>
            <person name="Kunst L."/>
        </authorList>
    </citation>
    <scope>FUNCTION</scope>
    <scope>SUBCELLULAR LOCATION</scope>
    <scope>DISRUPTION PHENOTYPE</scope>
</reference>
<name>CER7L_ARATH</name>
<protein>
    <recommendedName>
        <fullName evidence="3">Exosome complex component RRP45A</fullName>
    </recommendedName>
    <alternativeName>
        <fullName>Protein ECERIFERUM 7</fullName>
    </alternativeName>
    <alternativeName>
        <fullName evidence="3">RRP45 homolog A</fullName>
    </alternativeName>
    <alternativeName>
        <fullName evidence="3">Ribosomal RNA-processing protein 45A</fullName>
        <shortName evidence="2">AtRRPA5a</shortName>
    </alternativeName>
</protein>